<reference key="1">
    <citation type="submission" date="2008-01" db="EMBL/GenBank/DDBJ databases">
        <title>Complete sequence of Pseudomonas putida GB-1.</title>
        <authorList>
            <consortium name="US DOE Joint Genome Institute"/>
            <person name="Copeland A."/>
            <person name="Lucas S."/>
            <person name="Lapidus A."/>
            <person name="Barry K."/>
            <person name="Glavina del Rio T."/>
            <person name="Dalin E."/>
            <person name="Tice H."/>
            <person name="Pitluck S."/>
            <person name="Bruce D."/>
            <person name="Goodwin L."/>
            <person name="Chertkov O."/>
            <person name="Brettin T."/>
            <person name="Detter J.C."/>
            <person name="Han C."/>
            <person name="Kuske C.R."/>
            <person name="Schmutz J."/>
            <person name="Larimer F."/>
            <person name="Land M."/>
            <person name="Hauser L."/>
            <person name="Kyrpides N."/>
            <person name="Kim E."/>
            <person name="McCarthy J.K."/>
            <person name="Richardson P."/>
        </authorList>
    </citation>
    <scope>NUCLEOTIDE SEQUENCE [LARGE SCALE GENOMIC DNA]</scope>
    <source>
        <strain>GB-1</strain>
    </source>
</reference>
<accession>B0KL66</accession>
<evidence type="ECO:0000255" key="1">
    <source>
        <dbReference type="HAMAP-Rule" id="MF_00440"/>
    </source>
</evidence>
<proteinExistence type="inferred from homology"/>
<dbReference type="EMBL" id="CP000926">
    <property type="protein sequence ID" value="ABY96470.1"/>
    <property type="molecule type" value="Genomic_DNA"/>
</dbReference>
<dbReference type="RefSeq" id="WP_012270286.1">
    <property type="nucleotide sequence ID" value="NC_010322.1"/>
</dbReference>
<dbReference type="SMR" id="B0KL66"/>
<dbReference type="KEGG" id="ppg:PputGB1_0559"/>
<dbReference type="eggNOG" id="COG1327">
    <property type="taxonomic scope" value="Bacteria"/>
</dbReference>
<dbReference type="HOGENOM" id="CLU_108412_0_0_6"/>
<dbReference type="Proteomes" id="UP000002157">
    <property type="component" value="Chromosome"/>
</dbReference>
<dbReference type="GO" id="GO:0005524">
    <property type="term" value="F:ATP binding"/>
    <property type="evidence" value="ECO:0007669"/>
    <property type="project" value="UniProtKB-KW"/>
</dbReference>
<dbReference type="GO" id="GO:0003677">
    <property type="term" value="F:DNA binding"/>
    <property type="evidence" value="ECO:0007669"/>
    <property type="project" value="UniProtKB-KW"/>
</dbReference>
<dbReference type="GO" id="GO:0008270">
    <property type="term" value="F:zinc ion binding"/>
    <property type="evidence" value="ECO:0007669"/>
    <property type="project" value="UniProtKB-UniRule"/>
</dbReference>
<dbReference type="GO" id="GO:0045892">
    <property type="term" value="P:negative regulation of DNA-templated transcription"/>
    <property type="evidence" value="ECO:0007669"/>
    <property type="project" value="UniProtKB-UniRule"/>
</dbReference>
<dbReference type="HAMAP" id="MF_00440">
    <property type="entry name" value="NrdR"/>
    <property type="match status" value="1"/>
</dbReference>
<dbReference type="InterPro" id="IPR005144">
    <property type="entry name" value="ATP-cone_dom"/>
</dbReference>
<dbReference type="InterPro" id="IPR055173">
    <property type="entry name" value="NrdR-like_N"/>
</dbReference>
<dbReference type="InterPro" id="IPR003796">
    <property type="entry name" value="RNR_NrdR-like"/>
</dbReference>
<dbReference type="NCBIfam" id="TIGR00244">
    <property type="entry name" value="transcriptional regulator NrdR"/>
    <property type="match status" value="1"/>
</dbReference>
<dbReference type="PANTHER" id="PTHR30455">
    <property type="entry name" value="TRANSCRIPTIONAL REPRESSOR NRDR"/>
    <property type="match status" value="1"/>
</dbReference>
<dbReference type="PANTHER" id="PTHR30455:SF2">
    <property type="entry name" value="TRANSCRIPTIONAL REPRESSOR NRDR"/>
    <property type="match status" value="1"/>
</dbReference>
<dbReference type="Pfam" id="PF03477">
    <property type="entry name" value="ATP-cone"/>
    <property type="match status" value="1"/>
</dbReference>
<dbReference type="Pfam" id="PF22811">
    <property type="entry name" value="Zn_ribbon_NrdR"/>
    <property type="match status" value="1"/>
</dbReference>
<dbReference type="PROSITE" id="PS51161">
    <property type="entry name" value="ATP_CONE"/>
    <property type="match status" value="1"/>
</dbReference>
<protein>
    <recommendedName>
        <fullName evidence="1">Transcriptional repressor NrdR</fullName>
    </recommendedName>
</protein>
<organism>
    <name type="scientific">Pseudomonas putida (strain GB-1)</name>
    <dbReference type="NCBI Taxonomy" id="76869"/>
    <lineage>
        <taxon>Bacteria</taxon>
        <taxon>Pseudomonadati</taxon>
        <taxon>Pseudomonadota</taxon>
        <taxon>Gammaproteobacteria</taxon>
        <taxon>Pseudomonadales</taxon>
        <taxon>Pseudomonadaceae</taxon>
        <taxon>Pseudomonas</taxon>
    </lineage>
</organism>
<keyword id="KW-0067">ATP-binding</keyword>
<keyword id="KW-0238">DNA-binding</keyword>
<keyword id="KW-0479">Metal-binding</keyword>
<keyword id="KW-0547">Nucleotide-binding</keyword>
<keyword id="KW-0678">Repressor</keyword>
<keyword id="KW-0804">Transcription</keyword>
<keyword id="KW-0805">Transcription regulation</keyword>
<keyword id="KW-0862">Zinc</keyword>
<keyword id="KW-0863">Zinc-finger</keyword>
<feature type="chain" id="PRO_1000080805" description="Transcriptional repressor NrdR">
    <location>
        <begin position="1"/>
        <end position="154"/>
    </location>
</feature>
<feature type="domain" description="ATP-cone" evidence="1">
    <location>
        <begin position="49"/>
        <end position="139"/>
    </location>
</feature>
<feature type="zinc finger region" evidence="1">
    <location>
        <begin position="3"/>
        <end position="34"/>
    </location>
</feature>
<gene>
    <name evidence="1" type="primary">nrdR</name>
    <name type="ordered locus">PputGB1_0559</name>
</gene>
<name>NRDR_PSEPG</name>
<comment type="function">
    <text evidence="1">Negatively regulates transcription of bacterial ribonucleotide reductase nrd genes and operons by binding to NrdR-boxes.</text>
</comment>
<comment type="cofactor">
    <cofactor evidence="1">
        <name>Zn(2+)</name>
        <dbReference type="ChEBI" id="CHEBI:29105"/>
    </cofactor>
    <text evidence="1">Binds 1 zinc ion.</text>
</comment>
<comment type="similarity">
    <text evidence="1">Belongs to the NrdR family.</text>
</comment>
<sequence>MHCPFCGANDTKVIDSRLVAEGEQVRRRRECVACGERFTTFETAELVLPRLIKQDGTRQPFDEEKLRAGMQRALEKRPVSVERLEAALAHIKSRLRATGEREVKSLVVGEMVMAELRKLDEVAYIRFASVYRRFQDLDEFREEIDRLAREPARE</sequence>